<organism>
    <name type="scientific">Mus musculus</name>
    <name type="common">Mouse</name>
    <dbReference type="NCBI Taxonomy" id="10090"/>
    <lineage>
        <taxon>Eukaryota</taxon>
        <taxon>Metazoa</taxon>
        <taxon>Chordata</taxon>
        <taxon>Craniata</taxon>
        <taxon>Vertebrata</taxon>
        <taxon>Euteleostomi</taxon>
        <taxon>Mammalia</taxon>
        <taxon>Eutheria</taxon>
        <taxon>Euarchontoglires</taxon>
        <taxon>Glires</taxon>
        <taxon>Rodentia</taxon>
        <taxon>Myomorpha</taxon>
        <taxon>Muroidea</taxon>
        <taxon>Muridae</taxon>
        <taxon>Murinae</taxon>
        <taxon>Mus</taxon>
        <taxon>Mus</taxon>
    </lineage>
</organism>
<sequence>MFGGAKGGHFGVPPAGYSGAVPQSEAGTKAGPAGGRPADTMWRVRCKAKGGTHLLQGLSSRTRLRELQGQIAAITGIAPGSQRILVGYPPECLDLSDRDITLGDLPIQSGDMLIVEEDQTRPKASPAFSKYGAPSYVREALPVLTRTAVPADNSCLFTSVYYVVEGGVLNPACAPEMRRLIAQIVASDPVLYSEAILGKTNEDYCDWIRRDDTWGGAIEISILSKFYQCEICVVDTQTVRIDRFGEDAGYTKRVLLIYDGIHYDPLQRNFPDPDTPPLTIFSSNDDIVLVQALELADEARRKRQFTDVNRFTLRCMICQKGLTGQAEARDHARETGHTNFGEV</sequence>
<proteinExistence type="evidence at protein level"/>
<name>OTU1_MOUSE</name>
<dbReference type="EC" id="3.4.19.12" evidence="1"/>
<dbReference type="EMBL" id="AK036938">
    <property type="protein sequence ID" value="BAC29646.1"/>
    <property type="molecule type" value="mRNA"/>
</dbReference>
<dbReference type="EMBL" id="AK036991">
    <property type="protein sequence ID" value="BAC29661.1"/>
    <property type="status" value="ALT_FRAME"/>
    <property type="molecule type" value="mRNA"/>
</dbReference>
<dbReference type="EMBL" id="AK053730">
    <property type="protein sequence ID" value="BAC35495.1"/>
    <property type="status" value="ALT_SEQ"/>
    <property type="molecule type" value="mRNA"/>
</dbReference>
<dbReference type="EMBL" id="BC139034">
    <property type="protein sequence ID" value="AAI39035.1"/>
    <property type="molecule type" value="mRNA"/>
</dbReference>
<dbReference type="CCDS" id="CCDS48351.1"/>
<dbReference type="RefSeq" id="NP_848806.2">
    <property type="nucleotide sequence ID" value="NM_178691.5"/>
</dbReference>
<dbReference type="PDB" id="2KZR">
    <property type="method" value="NMR"/>
    <property type="chains" value="A=42-126"/>
</dbReference>
<dbReference type="PDBsum" id="2KZR"/>
<dbReference type="BMRB" id="Q8CB27"/>
<dbReference type="SMR" id="Q8CB27"/>
<dbReference type="BioGRID" id="230509">
    <property type="interactions" value="4"/>
</dbReference>
<dbReference type="FunCoup" id="Q8CB27">
    <property type="interactions" value="1856"/>
</dbReference>
<dbReference type="STRING" id="10090.ENSMUSP00000055318"/>
<dbReference type="MEROPS" id="C85.007"/>
<dbReference type="iPTMnet" id="Q8CB27"/>
<dbReference type="PhosphoSitePlus" id="Q8CB27"/>
<dbReference type="SwissPalm" id="Q8CB27"/>
<dbReference type="PaxDb" id="10090-ENSMUSP00000055318"/>
<dbReference type="ProteomicsDB" id="295489"/>
<dbReference type="Pumba" id="Q8CB27"/>
<dbReference type="Antibodypedia" id="34591">
    <property type="antibodies" value="163 antibodies from 27 providers"/>
</dbReference>
<dbReference type="DNASU" id="226418"/>
<dbReference type="Ensembl" id="ENSMUST00000049813.6">
    <property type="protein sequence ID" value="ENSMUSP00000055318.5"/>
    <property type="gene ID" value="ENSMUSG00000046404.6"/>
</dbReference>
<dbReference type="GeneID" id="226418"/>
<dbReference type="KEGG" id="mmu:226418"/>
<dbReference type="UCSC" id="uc007cmh.2">
    <property type="organism name" value="mouse"/>
</dbReference>
<dbReference type="AGR" id="MGI:2442596"/>
<dbReference type="CTD" id="55432"/>
<dbReference type="MGI" id="MGI:2442596">
    <property type="gene designation" value="Yod1"/>
</dbReference>
<dbReference type="VEuPathDB" id="HostDB:ENSMUSG00000046404"/>
<dbReference type="eggNOG" id="KOG3288">
    <property type="taxonomic scope" value="Eukaryota"/>
</dbReference>
<dbReference type="GeneTree" id="ENSGT00390000009989"/>
<dbReference type="HOGENOM" id="CLU_049327_1_0_1"/>
<dbReference type="InParanoid" id="Q8CB27"/>
<dbReference type="OMA" id="TRCILVY"/>
<dbReference type="OrthoDB" id="65596at2759"/>
<dbReference type="PhylomeDB" id="Q8CB27"/>
<dbReference type="TreeFam" id="TF323700"/>
<dbReference type="Reactome" id="R-MMU-5689896">
    <property type="pathway name" value="Ovarian tumor domain proteases"/>
</dbReference>
<dbReference type="BioGRID-ORCS" id="226418">
    <property type="hits" value="0 hits in 76 CRISPR screens"/>
</dbReference>
<dbReference type="ChiTaRS" id="Yod1">
    <property type="organism name" value="mouse"/>
</dbReference>
<dbReference type="EvolutionaryTrace" id="Q8CB27"/>
<dbReference type="PRO" id="PR:Q8CB27"/>
<dbReference type="Proteomes" id="UP000000589">
    <property type="component" value="Chromosome 1"/>
</dbReference>
<dbReference type="RNAct" id="Q8CB27">
    <property type="molecule type" value="protein"/>
</dbReference>
<dbReference type="Bgee" id="ENSMUSG00000046404">
    <property type="expression patterns" value="Expressed in blood and 213 other cell types or tissues"/>
</dbReference>
<dbReference type="GO" id="GO:0005737">
    <property type="term" value="C:cytoplasm"/>
    <property type="evidence" value="ECO:0000250"/>
    <property type="project" value="UniProtKB"/>
</dbReference>
<dbReference type="GO" id="GO:0004843">
    <property type="term" value="F:cysteine-type deubiquitinase activity"/>
    <property type="evidence" value="ECO:0000250"/>
    <property type="project" value="UniProtKB"/>
</dbReference>
<dbReference type="GO" id="GO:1990380">
    <property type="term" value="F:K48-linked deubiquitinase activity"/>
    <property type="evidence" value="ECO:0007669"/>
    <property type="project" value="Ensembl"/>
</dbReference>
<dbReference type="GO" id="GO:0031625">
    <property type="term" value="F:ubiquitin protein ligase binding"/>
    <property type="evidence" value="ECO:0007669"/>
    <property type="project" value="Ensembl"/>
</dbReference>
<dbReference type="GO" id="GO:0008270">
    <property type="term" value="F:zinc ion binding"/>
    <property type="evidence" value="ECO:0007669"/>
    <property type="project" value="UniProtKB-KW"/>
</dbReference>
<dbReference type="GO" id="GO:0030968">
    <property type="term" value="P:endoplasmic reticulum unfolded protein response"/>
    <property type="evidence" value="ECO:0000250"/>
    <property type="project" value="UniProtKB"/>
</dbReference>
<dbReference type="GO" id="GO:0036503">
    <property type="term" value="P:ERAD pathway"/>
    <property type="evidence" value="ECO:0000250"/>
    <property type="project" value="UniProtKB"/>
</dbReference>
<dbReference type="GO" id="GO:0016236">
    <property type="term" value="P:macroautophagy"/>
    <property type="evidence" value="ECO:0000250"/>
    <property type="project" value="UniProtKB"/>
</dbReference>
<dbReference type="GO" id="GO:1904153">
    <property type="term" value="P:negative regulation of retrograde protein transport, ER to cytosol"/>
    <property type="evidence" value="ECO:0007669"/>
    <property type="project" value="Ensembl"/>
</dbReference>
<dbReference type="GO" id="GO:0035871">
    <property type="term" value="P:protein K11-linked deubiquitination"/>
    <property type="evidence" value="ECO:0000250"/>
    <property type="project" value="UniProtKB"/>
</dbReference>
<dbReference type="GO" id="GO:1990167">
    <property type="term" value="P:protein K27-linked deubiquitination"/>
    <property type="evidence" value="ECO:0000250"/>
    <property type="project" value="UniProtKB"/>
</dbReference>
<dbReference type="GO" id="GO:0035523">
    <property type="term" value="P:protein K29-linked deubiquitination"/>
    <property type="evidence" value="ECO:0000250"/>
    <property type="project" value="UniProtKB"/>
</dbReference>
<dbReference type="GO" id="GO:1990168">
    <property type="term" value="P:protein K33-linked deubiquitination"/>
    <property type="evidence" value="ECO:0000250"/>
    <property type="project" value="UniProtKB"/>
</dbReference>
<dbReference type="GO" id="GO:0071108">
    <property type="term" value="P:protein K48-linked deubiquitination"/>
    <property type="evidence" value="ECO:0000250"/>
    <property type="project" value="UniProtKB"/>
</dbReference>
<dbReference type="GO" id="GO:0070536">
    <property type="term" value="P:protein K63-linked deubiquitination"/>
    <property type="evidence" value="ECO:0000250"/>
    <property type="project" value="UniProtKB"/>
</dbReference>
<dbReference type="CDD" id="cd22745">
    <property type="entry name" value="OTU_OTU1"/>
    <property type="match status" value="1"/>
</dbReference>
<dbReference type="CDD" id="cd17059">
    <property type="entry name" value="Ubl_OTU1"/>
    <property type="match status" value="1"/>
</dbReference>
<dbReference type="FunFam" id="3.10.20.90:FF:000096">
    <property type="entry name" value="Ubiquitin thioesterase OTU1"/>
    <property type="match status" value="1"/>
</dbReference>
<dbReference type="FunFam" id="3.90.70.80:FF:000006">
    <property type="entry name" value="Ubiquitin thioesterase OTU1"/>
    <property type="match status" value="1"/>
</dbReference>
<dbReference type="Gene3D" id="3.90.70.80">
    <property type="match status" value="1"/>
</dbReference>
<dbReference type="Gene3D" id="3.10.20.90">
    <property type="entry name" value="Phosphatidylinositol 3-kinase Catalytic Subunit, Chain A, domain 1"/>
    <property type="match status" value="1"/>
</dbReference>
<dbReference type="InterPro" id="IPR048857">
    <property type="entry name" value="OTU1_Ubl"/>
</dbReference>
<dbReference type="InterPro" id="IPR003323">
    <property type="entry name" value="OTU_dom"/>
</dbReference>
<dbReference type="InterPro" id="IPR038765">
    <property type="entry name" value="Papain-like_cys_pep_sf"/>
</dbReference>
<dbReference type="InterPro" id="IPR029071">
    <property type="entry name" value="Ubiquitin-like_domsf"/>
</dbReference>
<dbReference type="InterPro" id="IPR013087">
    <property type="entry name" value="Znf_C2H2_type"/>
</dbReference>
<dbReference type="PANTHER" id="PTHR13312">
    <property type="entry name" value="HIV-INDUCED PROTEIN-7-LIKE PROTEASE"/>
    <property type="match status" value="1"/>
</dbReference>
<dbReference type="PANTHER" id="PTHR13312:SF0">
    <property type="entry name" value="UBIQUITIN THIOESTERASE OTU1"/>
    <property type="match status" value="1"/>
</dbReference>
<dbReference type="Pfam" id="PF02338">
    <property type="entry name" value="OTU"/>
    <property type="match status" value="1"/>
</dbReference>
<dbReference type="Pfam" id="PF21403">
    <property type="entry name" value="OTU1_UBXL"/>
    <property type="match status" value="1"/>
</dbReference>
<dbReference type="Pfam" id="PF24560">
    <property type="entry name" value="zf-C2H2_OTU1_C"/>
    <property type="match status" value="1"/>
</dbReference>
<dbReference type="SUPFAM" id="SSF54001">
    <property type="entry name" value="Cysteine proteinases"/>
    <property type="match status" value="1"/>
</dbReference>
<dbReference type="SUPFAM" id="SSF54236">
    <property type="entry name" value="Ubiquitin-like"/>
    <property type="match status" value="1"/>
</dbReference>
<dbReference type="PROSITE" id="PS50802">
    <property type="entry name" value="OTU"/>
    <property type="match status" value="1"/>
</dbReference>
<dbReference type="PROSITE" id="PS00028">
    <property type="entry name" value="ZINC_FINGER_C2H2_1"/>
    <property type="match status" value="1"/>
</dbReference>
<feature type="chain" id="PRO_0000282357" description="Ubiquitin thioesterase OTU1">
    <location>
        <begin position="1"/>
        <end position="343"/>
    </location>
</feature>
<feature type="domain" description="OTU" evidence="3">
    <location>
        <begin position="144"/>
        <end position="269"/>
    </location>
</feature>
<feature type="zinc finger region" description="C2H2-type">
    <location>
        <begin position="313"/>
        <end position="337"/>
    </location>
</feature>
<feature type="region of interest" description="UBX-like">
    <location>
        <begin position="45"/>
        <end position="123"/>
    </location>
</feature>
<feature type="region of interest" description="Cys-loop" evidence="1">
    <location>
        <begin position="149"/>
        <end position="155"/>
    </location>
</feature>
<feature type="region of interest" description="Variable-loop" evidence="1">
    <location>
        <begin position="208"/>
        <end position="218"/>
    </location>
</feature>
<feature type="region of interest" description="His-loop" evidence="1">
    <location>
        <begin position="258"/>
        <end position="262"/>
    </location>
</feature>
<feature type="region of interest" description="S2 site" evidence="1">
    <location>
        <begin position="286"/>
        <end position="291"/>
    </location>
</feature>
<feature type="active site" evidence="2">
    <location>
        <position position="152"/>
    </location>
</feature>
<feature type="active site" description="Nucleophile" evidence="1">
    <location>
        <position position="155"/>
    </location>
</feature>
<feature type="active site" evidence="1">
    <location>
        <position position="262"/>
    </location>
</feature>
<feature type="active site" evidence="2">
    <location>
        <position position="337"/>
    </location>
</feature>
<feature type="binding site" evidence="1">
    <location>
        <position position="261"/>
    </location>
    <ligand>
        <name>substrate</name>
    </ligand>
</feature>
<feature type="strand" evidence="5">
    <location>
        <begin position="44"/>
        <end position="48"/>
    </location>
</feature>
<feature type="strand" evidence="5">
    <location>
        <begin position="51"/>
        <end position="55"/>
    </location>
</feature>
<feature type="helix" evidence="5">
    <location>
        <begin position="64"/>
        <end position="74"/>
    </location>
</feature>
<feature type="turn" evidence="5">
    <location>
        <begin position="79"/>
        <end position="81"/>
    </location>
</feature>
<feature type="strand" evidence="5">
    <location>
        <begin position="85"/>
        <end position="88"/>
    </location>
</feature>
<feature type="turn" evidence="5">
    <location>
        <begin position="102"/>
        <end position="104"/>
    </location>
</feature>
<feature type="strand" evidence="5">
    <location>
        <begin position="112"/>
        <end position="114"/>
    </location>
</feature>
<protein>
    <recommendedName>
        <fullName>Ubiquitin thioesterase OTU1</fullName>
        <ecNumber evidence="1">3.4.19.12</ecNumber>
    </recommendedName>
</protein>
<comment type="function">
    <text evidence="1">Hydrolase that can remove conjugated ubiquitin from proteins and participates in endoplasmic reticulum-associated degradation (ERAD) for misfolded lumenal proteins. May act by triming the ubiquitin chain on the associated substrate to facilitate their threading through the VCP/p97 pore. Ubiquitin moieties on substrates may present a steric impediment to the threading process when the substrate is transferred to the VCP pore and threaded through VCP's axial channel. Mediates deubiquitination of 'Lys-27'-, 'Lys-29'- and 'Lys-33'-linked polyubiquitin chains. Also able to hydrolyze 'Lys-11'-linked ubiquitin chains. Cleaves both polyubiquitin and di-ubiquitin. May play a role in macroautophagy, regulating for instance the clearance of damaged lysosomes. May recruit PLAA, UBXN6 and VCP to damaged lysosome membranes decorated with K48-linked ubiquitin chains and remove these chains allowing autophagosome formation.</text>
</comment>
<comment type="catalytic activity">
    <reaction evidence="1">
        <text>Thiol-dependent hydrolysis of ester, thioester, amide, peptide and isopeptide bonds formed by the C-terminal Gly of ubiquitin (a 76-residue protein attached to proteins as an intracellular targeting signal).</text>
        <dbReference type="EC" id="3.4.19.12"/>
    </reaction>
</comment>
<comment type="subunit">
    <text evidence="1">Interacts with VCP; the interaction is direct. Interacts with FAF2/UBXD8. Interacts with DERL1; however interaction is dependent on the UBAX-like region, suggesting that it may be indirect. Interacts with PLAA, UBXN6 and VCP; may form a complex involved in macroautophagy.</text>
</comment>
<comment type="subcellular location">
    <subcellularLocation>
        <location evidence="1">Cytoplasm</location>
    </subcellularLocation>
    <text evidence="1">Recruited to damaged lysosomes decorated with K48-linked ubiquitin chains.</text>
</comment>
<comment type="domain">
    <text evidence="1">The UBAX-like region mediates the interaction with VCP.</text>
</comment>
<comment type="domain">
    <text evidence="1">The C2H2-type zinc finger mediates specificity for 'Lys-27'-, 'Lys-29'- and 'Lys-33'-linked polyubiquitin chains but not for 'Lys-11'-linked ubiquitin chains. Selectivity for 'Lys-11'-linked ubiquitin chains is provided by recognition of the sequence surrounding 'Lys-11' in ubiquitin. The S2 site region provides specificity for longer 'Lys-11'-linked ubiquitin chains.</text>
</comment>
<comment type="sequence caution" evidence="4">
    <conflict type="frameshift">
        <sequence resource="EMBL-CDS" id="BAC29661"/>
    </conflict>
</comment>
<comment type="sequence caution" evidence="4">
    <conflict type="erroneous termination">
        <sequence resource="EMBL-CDS" id="BAC35495"/>
    </conflict>
    <text>Extended C-terminus.</text>
</comment>
<gene>
    <name type="primary">Yod1</name>
</gene>
<evidence type="ECO:0000250" key="1">
    <source>
        <dbReference type="UniProtKB" id="Q5VVQ6"/>
    </source>
</evidence>
<evidence type="ECO:0000250" key="2">
    <source>
        <dbReference type="UniProtKB" id="Q96FW1"/>
    </source>
</evidence>
<evidence type="ECO:0000255" key="3">
    <source>
        <dbReference type="PROSITE-ProRule" id="PRU00139"/>
    </source>
</evidence>
<evidence type="ECO:0000305" key="4"/>
<evidence type="ECO:0007829" key="5">
    <source>
        <dbReference type="PDB" id="2KZR"/>
    </source>
</evidence>
<accession>Q8CB27</accession>
<accession>B2RSW9</accession>
<accession>Q8BPM9</accession>
<accession>Q8CB24</accession>
<reference key="1">
    <citation type="journal article" date="2005" name="Science">
        <title>The transcriptional landscape of the mammalian genome.</title>
        <authorList>
            <person name="Carninci P."/>
            <person name="Kasukawa T."/>
            <person name="Katayama S."/>
            <person name="Gough J."/>
            <person name="Frith M.C."/>
            <person name="Maeda N."/>
            <person name="Oyama R."/>
            <person name="Ravasi T."/>
            <person name="Lenhard B."/>
            <person name="Wells C."/>
            <person name="Kodzius R."/>
            <person name="Shimokawa K."/>
            <person name="Bajic V.B."/>
            <person name="Brenner S.E."/>
            <person name="Batalov S."/>
            <person name="Forrest A.R."/>
            <person name="Zavolan M."/>
            <person name="Davis M.J."/>
            <person name="Wilming L.G."/>
            <person name="Aidinis V."/>
            <person name="Allen J.E."/>
            <person name="Ambesi-Impiombato A."/>
            <person name="Apweiler R."/>
            <person name="Aturaliya R.N."/>
            <person name="Bailey T.L."/>
            <person name="Bansal M."/>
            <person name="Baxter L."/>
            <person name="Beisel K.W."/>
            <person name="Bersano T."/>
            <person name="Bono H."/>
            <person name="Chalk A.M."/>
            <person name="Chiu K.P."/>
            <person name="Choudhary V."/>
            <person name="Christoffels A."/>
            <person name="Clutterbuck D.R."/>
            <person name="Crowe M.L."/>
            <person name="Dalla E."/>
            <person name="Dalrymple B.P."/>
            <person name="de Bono B."/>
            <person name="Della Gatta G."/>
            <person name="di Bernardo D."/>
            <person name="Down T."/>
            <person name="Engstrom P."/>
            <person name="Fagiolini M."/>
            <person name="Faulkner G."/>
            <person name="Fletcher C.F."/>
            <person name="Fukushima T."/>
            <person name="Furuno M."/>
            <person name="Futaki S."/>
            <person name="Gariboldi M."/>
            <person name="Georgii-Hemming P."/>
            <person name="Gingeras T.R."/>
            <person name="Gojobori T."/>
            <person name="Green R.E."/>
            <person name="Gustincich S."/>
            <person name="Harbers M."/>
            <person name="Hayashi Y."/>
            <person name="Hensch T.K."/>
            <person name="Hirokawa N."/>
            <person name="Hill D."/>
            <person name="Huminiecki L."/>
            <person name="Iacono M."/>
            <person name="Ikeo K."/>
            <person name="Iwama A."/>
            <person name="Ishikawa T."/>
            <person name="Jakt M."/>
            <person name="Kanapin A."/>
            <person name="Katoh M."/>
            <person name="Kawasawa Y."/>
            <person name="Kelso J."/>
            <person name="Kitamura H."/>
            <person name="Kitano H."/>
            <person name="Kollias G."/>
            <person name="Krishnan S.P."/>
            <person name="Kruger A."/>
            <person name="Kummerfeld S.K."/>
            <person name="Kurochkin I.V."/>
            <person name="Lareau L.F."/>
            <person name="Lazarevic D."/>
            <person name="Lipovich L."/>
            <person name="Liu J."/>
            <person name="Liuni S."/>
            <person name="McWilliam S."/>
            <person name="Madan Babu M."/>
            <person name="Madera M."/>
            <person name="Marchionni L."/>
            <person name="Matsuda H."/>
            <person name="Matsuzawa S."/>
            <person name="Miki H."/>
            <person name="Mignone F."/>
            <person name="Miyake S."/>
            <person name="Morris K."/>
            <person name="Mottagui-Tabar S."/>
            <person name="Mulder N."/>
            <person name="Nakano N."/>
            <person name="Nakauchi H."/>
            <person name="Ng P."/>
            <person name="Nilsson R."/>
            <person name="Nishiguchi S."/>
            <person name="Nishikawa S."/>
            <person name="Nori F."/>
            <person name="Ohara O."/>
            <person name="Okazaki Y."/>
            <person name="Orlando V."/>
            <person name="Pang K.C."/>
            <person name="Pavan W.J."/>
            <person name="Pavesi G."/>
            <person name="Pesole G."/>
            <person name="Petrovsky N."/>
            <person name="Piazza S."/>
            <person name="Reed J."/>
            <person name="Reid J.F."/>
            <person name="Ring B.Z."/>
            <person name="Ringwald M."/>
            <person name="Rost B."/>
            <person name="Ruan Y."/>
            <person name="Salzberg S.L."/>
            <person name="Sandelin A."/>
            <person name="Schneider C."/>
            <person name="Schoenbach C."/>
            <person name="Sekiguchi K."/>
            <person name="Semple C.A."/>
            <person name="Seno S."/>
            <person name="Sessa L."/>
            <person name="Sheng Y."/>
            <person name="Shibata Y."/>
            <person name="Shimada H."/>
            <person name="Shimada K."/>
            <person name="Silva D."/>
            <person name="Sinclair B."/>
            <person name="Sperling S."/>
            <person name="Stupka E."/>
            <person name="Sugiura K."/>
            <person name="Sultana R."/>
            <person name="Takenaka Y."/>
            <person name="Taki K."/>
            <person name="Tammoja K."/>
            <person name="Tan S.L."/>
            <person name="Tang S."/>
            <person name="Taylor M.S."/>
            <person name="Tegner J."/>
            <person name="Teichmann S.A."/>
            <person name="Ueda H.R."/>
            <person name="van Nimwegen E."/>
            <person name="Verardo R."/>
            <person name="Wei C.L."/>
            <person name="Yagi K."/>
            <person name="Yamanishi H."/>
            <person name="Zabarovsky E."/>
            <person name="Zhu S."/>
            <person name="Zimmer A."/>
            <person name="Hide W."/>
            <person name="Bult C."/>
            <person name="Grimmond S.M."/>
            <person name="Teasdale R.D."/>
            <person name="Liu E.T."/>
            <person name="Brusic V."/>
            <person name="Quackenbush J."/>
            <person name="Wahlestedt C."/>
            <person name="Mattick J.S."/>
            <person name="Hume D.A."/>
            <person name="Kai C."/>
            <person name="Sasaki D."/>
            <person name="Tomaru Y."/>
            <person name="Fukuda S."/>
            <person name="Kanamori-Katayama M."/>
            <person name="Suzuki M."/>
            <person name="Aoki J."/>
            <person name="Arakawa T."/>
            <person name="Iida J."/>
            <person name="Imamura K."/>
            <person name="Itoh M."/>
            <person name="Kato T."/>
            <person name="Kawaji H."/>
            <person name="Kawagashira N."/>
            <person name="Kawashima T."/>
            <person name="Kojima M."/>
            <person name="Kondo S."/>
            <person name="Konno H."/>
            <person name="Nakano K."/>
            <person name="Ninomiya N."/>
            <person name="Nishio T."/>
            <person name="Okada M."/>
            <person name="Plessy C."/>
            <person name="Shibata K."/>
            <person name="Shiraki T."/>
            <person name="Suzuki S."/>
            <person name="Tagami M."/>
            <person name="Waki K."/>
            <person name="Watahiki A."/>
            <person name="Okamura-Oho Y."/>
            <person name="Suzuki H."/>
            <person name="Kawai J."/>
            <person name="Hayashizaki Y."/>
        </authorList>
    </citation>
    <scope>NUCLEOTIDE SEQUENCE [LARGE SCALE MRNA]</scope>
    <source>
        <strain>C57BL/6J</strain>
        <tissue>Eye</tissue>
        <tissue>Vagina</tissue>
    </source>
</reference>
<reference key="2">
    <citation type="journal article" date="2004" name="Genome Res.">
        <title>The status, quality, and expansion of the NIH full-length cDNA project: the Mammalian Gene Collection (MGC).</title>
        <authorList>
            <consortium name="The MGC Project Team"/>
        </authorList>
    </citation>
    <scope>NUCLEOTIDE SEQUENCE [LARGE SCALE MRNA]</scope>
    <source>
        <tissue>Brain</tissue>
    </source>
</reference>
<reference key="3">
    <citation type="journal article" date="2010" name="Cell">
        <title>A tissue-specific atlas of mouse protein phosphorylation and expression.</title>
        <authorList>
            <person name="Huttlin E.L."/>
            <person name="Jedrychowski M.P."/>
            <person name="Elias J.E."/>
            <person name="Goswami T."/>
            <person name="Rad R."/>
            <person name="Beausoleil S.A."/>
            <person name="Villen J."/>
            <person name="Haas W."/>
            <person name="Sowa M.E."/>
            <person name="Gygi S.P."/>
        </authorList>
    </citation>
    <scope>IDENTIFICATION BY MASS SPECTROMETRY [LARGE SCALE ANALYSIS]</scope>
    <source>
        <tissue>Spleen</tissue>
        <tissue>Testis</tissue>
    </source>
</reference>
<reference key="4">
    <citation type="submission" date="2010-08" db="PDB data bank">
        <title>Northeast structural genomics consortium target mmt2a.</title>
        <authorList>
            <consortium name="Northeast structural genomics consortium (NESG)"/>
        </authorList>
    </citation>
    <scope>STRUCTURE BY NMR OF 42-126</scope>
</reference>
<keyword id="KW-0002">3D-structure</keyword>
<keyword id="KW-0963">Cytoplasm</keyword>
<keyword id="KW-0378">Hydrolase</keyword>
<keyword id="KW-0479">Metal-binding</keyword>
<keyword id="KW-0645">Protease</keyword>
<keyword id="KW-1185">Reference proteome</keyword>
<keyword id="KW-0788">Thiol protease</keyword>
<keyword id="KW-0833">Ubl conjugation pathway</keyword>
<keyword id="KW-0834">Unfolded protein response</keyword>
<keyword id="KW-0862">Zinc</keyword>
<keyword id="KW-0863">Zinc-finger</keyword>